<sequence length="479" mass="53348">MHAHLIKLLSLSSLTAALMAAAGVARADDAQAPTFKAEPCCSLCPAAHDAKNYTTRYQQNFTTLVQAQGDWLFRTQEDLRTEFDTTPGGYRRMKELHDAFKSKGVELVVVYQPTRGLVDRNKLFPAERDKFDYDKALKNYQAMLGRFSKMGYWVPDLSPLTNEQQAHDFYFRGDQHWTPYGAQRTAKIVAETVKKVPGYSSIPKREFESHISGRMGKTGTLHNMAGQLCGTSYAVQYMDQFTTEPKGEAGDGDLFGDAGNPEITLVGTSHSGKNYNFAGFLQEYMGADVLNVAFPGGGLEGSMLQYLGSEDFQKRPPKILIWEFSPLYRLDQETIYRQMMALLDNGCEGKPAVMSASTTLKPGNNEVLVNGKNGIKDIRNGSNQIDIRFDDTSVKTLQARLWYMNGRHEDLKIEKPETSDTDGRFAFELREDEDWADQQLLALEIQGPEAGTAPQKVAAKVCKRNVFPSAAKHTAQAGL</sequence>
<evidence type="ECO:0000250" key="1"/>
<evidence type="ECO:0000255" key="2"/>
<evidence type="ECO:0000305" key="3"/>
<dbReference type="EC" id="2.3.1.-"/>
<dbReference type="EMBL" id="AE016853">
    <property type="protein sequence ID" value="AAO54762.1"/>
    <property type="molecule type" value="Genomic_DNA"/>
</dbReference>
<dbReference type="RefSeq" id="NP_791067.1">
    <property type="nucleotide sequence ID" value="NC_004578.1"/>
</dbReference>
<dbReference type="RefSeq" id="WP_011103482.1">
    <property type="nucleotide sequence ID" value="NC_004578.1"/>
</dbReference>
<dbReference type="SMR" id="Q887Q4"/>
<dbReference type="STRING" id="223283.PSPTO_1237"/>
<dbReference type="GeneID" id="1182873"/>
<dbReference type="KEGG" id="pst:PSPTO_1237"/>
<dbReference type="PATRIC" id="fig|223283.9.peg.1258"/>
<dbReference type="eggNOG" id="ENOG502Z8PP">
    <property type="taxonomic scope" value="Bacteria"/>
</dbReference>
<dbReference type="HOGENOM" id="CLU_651753_0_0_6"/>
<dbReference type="OrthoDB" id="6773032at2"/>
<dbReference type="PhylomeDB" id="Q887Q4"/>
<dbReference type="UniPathway" id="UPA00286"/>
<dbReference type="Proteomes" id="UP000002515">
    <property type="component" value="Chromosome"/>
</dbReference>
<dbReference type="GO" id="GO:0042597">
    <property type="term" value="C:periplasmic space"/>
    <property type="evidence" value="ECO:0007669"/>
    <property type="project" value="UniProtKB-SubCell"/>
</dbReference>
<dbReference type="GO" id="GO:0016746">
    <property type="term" value="F:acyltransferase activity"/>
    <property type="evidence" value="ECO:0007669"/>
    <property type="project" value="UniProtKB-KW"/>
</dbReference>
<dbReference type="GO" id="GO:0042121">
    <property type="term" value="P:alginic acid biosynthetic process"/>
    <property type="evidence" value="ECO:0007669"/>
    <property type="project" value="UniProtKB-UniPathway"/>
</dbReference>
<dbReference type="CDD" id="cd14487">
    <property type="entry name" value="AlgX_C"/>
    <property type="match status" value="1"/>
</dbReference>
<dbReference type="CDD" id="cd14441">
    <property type="entry name" value="AlgX_N"/>
    <property type="match status" value="1"/>
</dbReference>
<dbReference type="Gene3D" id="2.60.120.1380">
    <property type="entry name" value="C-terminal carbohydrate-binding module"/>
    <property type="match status" value="1"/>
</dbReference>
<dbReference type="InterPro" id="IPR031811">
    <property type="entry name" value="ALGX/ALGJ_SGNH-like"/>
</dbReference>
<dbReference type="InterPro" id="IPR031798">
    <property type="entry name" value="AlgX_C"/>
</dbReference>
<dbReference type="InterPro" id="IPR038639">
    <property type="entry name" value="AlgX_C_sf"/>
</dbReference>
<dbReference type="InterPro" id="IPR034655">
    <property type="entry name" value="AlgX_N"/>
</dbReference>
<dbReference type="Pfam" id="PF16822">
    <property type="entry name" value="ALGX"/>
    <property type="match status" value="1"/>
</dbReference>
<dbReference type="Pfam" id="PF16824">
    <property type="entry name" value="CBM_26"/>
    <property type="match status" value="1"/>
</dbReference>
<feature type="signal peptide" evidence="2">
    <location>
        <begin position="1"/>
        <end position="27"/>
    </location>
</feature>
<feature type="chain" id="PRO_0000020674" description="Alginate biosynthesis protein AlgX">
    <location>
        <begin position="28"/>
        <end position="479"/>
    </location>
</feature>
<feature type="region of interest" description="SGNH hydrolase-like domain">
    <location>
        <begin position="27"/>
        <end position="347"/>
    </location>
</feature>
<feature type="region of interest" description="CBM domain">
    <location>
        <begin position="348"/>
        <end position="476"/>
    </location>
</feature>
<feature type="active site" evidence="1">
    <location>
        <position position="174"/>
    </location>
</feature>
<feature type="active site" description="Proton acceptor" evidence="1">
    <location>
        <position position="176"/>
    </location>
</feature>
<feature type="active site" description="Nucleophile" evidence="1">
    <location>
        <position position="269"/>
    </location>
</feature>
<feature type="disulfide bond" evidence="1">
    <location>
        <begin position="44"/>
        <end position="229"/>
    </location>
</feature>
<feature type="disulfide bond" evidence="1">
    <location>
        <begin position="347"/>
        <end position="462"/>
    </location>
</feature>
<reference key="1">
    <citation type="journal article" date="2003" name="Proc. Natl. Acad. Sci. U.S.A.">
        <title>The complete genome sequence of the Arabidopsis and tomato pathogen Pseudomonas syringae pv. tomato DC3000.</title>
        <authorList>
            <person name="Buell C.R."/>
            <person name="Joardar V."/>
            <person name="Lindeberg M."/>
            <person name="Selengut J."/>
            <person name="Paulsen I.T."/>
            <person name="Gwinn M.L."/>
            <person name="Dodson R.J."/>
            <person name="DeBoy R.T."/>
            <person name="Durkin A.S."/>
            <person name="Kolonay J.F."/>
            <person name="Madupu R."/>
            <person name="Daugherty S.C."/>
            <person name="Brinkac L.M."/>
            <person name="Beanan M.J."/>
            <person name="Haft D.H."/>
            <person name="Nelson W.C."/>
            <person name="Davidsen T.M."/>
            <person name="Zafar N."/>
            <person name="Zhou L."/>
            <person name="Liu J."/>
            <person name="Yuan Q."/>
            <person name="Khouri H.M."/>
            <person name="Fedorova N.B."/>
            <person name="Tran B."/>
            <person name="Russell D."/>
            <person name="Berry K.J."/>
            <person name="Utterback T.R."/>
            <person name="Van Aken S.E."/>
            <person name="Feldblyum T.V."/>
            <person name="D'Ascenzo M."/>
            <person name="Deng W.-L."/>
            <person name="Ramos A.R."/>
            <person name="Alfano J.R."/>
            <person name="Cartinhour S."/>
            <person name="Chatterjee A.K."/>
            <person name="Delaney T.P."/>
            <person name="Lazarowitz S.G."/>
            <person name="Martin G.B."/>
            <person name="Schneider D.J."/>
            <person name="Tang X."/>
            <person name="Bender C.L."/>
            <person name="White O."/>
            <person name="Fraser C.M."/>
            <person name="Collmer A."/>
        </authorList>
    </citation>
    <scope>NUCLEOTIDE SEQUENCE [LARGE SCALE GENOMIC DNA]</scope>
    <source>
        <strain>ATCC BAA-871 / DC3000</strain>
    </source>
</reference>
<name>ALGX_PSESM</name>
<protein>
    <recommendedName>
        <fullName>Alginate biosynthesis protein AlgX</fullName>
    </recommendedName>
    <alternativeName>
        <fullName>Probable alginate O-acetyltransferase AlgX</fullName>
        <ecNumber>2.3.1.-</ecNumber>
    </alternativeName>
</protein>
<organism>
    <name type="scientific">Pseudomonas syringae pv. tomato (strain ATCC BAA-871 / DC3000)</name>
    <dbReference type="NCBI Taxonomy" id="223283"/>
    <lineage>
        <taxon>Bacteria</taxon>
        <taxon>Pseudomonadati</taxon>
        <taxon>Pseudomonadota</taxon>
        <taxon>Gammaproteobacteria</taxon>
        <taxon>Pseudomonadales</taxon>
        <taxon>Pseudomonadaceae</taxon>
        <taxon>Pseudomonas</taxon>
    </lineage>
</organism>
<gene>
    <name type="primary">algX</name>
    <name type="ordered locus">PSPTO_1237</name>
</gene>
<accession>Q887Q4</accession>
<comment type="function">
    <text evidence="1">Plays two roles in the biosynthesis of the exopolysaccharide alginate: protects alginate from degradation as the polymer traverses the periplasm, and also plays a role in its O-acetylation. Probably has acetyltransferase activity in vivo (By similarity).</text>
</comment>
<comment type="pathway">
    <text>Glycan biosynthesis; alginate biosynthesis.</text>
</comment>
<comment type="subunit">
    <text evidence="1">Monomer.</text>
</comment>
<comment type="subcellular location">
    <subcellularLocation>
        <location evidence="1">Periplasm</location>
    </subcellularLocation>
</comment>
<comment type="domain">
    <text evidence="1">Consists of two domains, with an N-terminal domain with structural homology to members of the SGNH (GDSL) hydrolase superfamily and a C-terminal carbohydrate-binding module (CBM) that may bind alginate.</text>
</comment>
<comment type="similarity">
    <text evidence="3">Belongs to the AlgX family.</text>
</comment>
<proteinExistence type="inferred from homology"/>
<keyword id="KW-0012">Acyltransferase</keyword>
<keyword id="KW-0016">Alginate biosynthesis</keyword>
<keyword id="KW-1015">Disulfide bond</keyword>
<keyword id="KW-0574">Periplasm</keyword>
<keyword id="KW-1185">Reference proteome</keyword>
<keyword id="KW-0732">Signal</keyword>
<keyword id="KW-0808">Transferase</keyword>